<sequence>MSQSGSVLRRNGFTFKQFFVAHDRCAMKVGTDGILLGAWAPVADVKRILDIGTGSGLLALMLAQRTDDNVPIDAVELDAGAAMQAQENVAHSPWPHRITVHTDDIQRWAPRQTVRFDLIISNPPYYEPGVECATPQREQARYTATLDHQTLLAIAADCITEDGFFCVVLPEQIGNAFTQQALNMGWHLRLRTDVAENEARLPHRVLLAFSPQAGECFSDRLVIRGSDQHYSESYTALTQAFYLFM</sequence>
<name>TRMN6_SALPC</name>
<feature type="chain" id="PRO_0000387410" description="tRNA1(Val) (adenine(37)-N6)-methyltransferase">
    <location>
        <begin position="1"/>
        <end position="245"/>
    </location>
</feature>
<reference key="1">
    <citation type="journal article" date="2009" name="PLoS ONE">
        <title>Salmonella paratyphi C: genetic divergence from Salmonella choleraesuis and pathogenic convergence with Salmonella typhi.</title>
        <authorList>
            <person name="Liu W.-Q."/>
            <person name="Feng Y."/>
            <person name="Wang Y."/>
            <person name="Zou Q.-H."/>
            <person name="Chen F."/>
            <person name="Guo J.-T."/>
            <person name="Peng Y.-H."/>
            <person name="Jin Y."/>
            <person name="Li Y.-G."/>
            <person name="Hu S.-N."/>
            <person name="Johnston R.N."/>
            <person name="Liu G.-R."/>
            <person name="Liu S.-L."/>
        </authorList>
    </citation>
    <scope>NUCLEOTIDE SEQUENCE [LARGE SCALE GENOMIC DNA]</scope>
    <source>
        <strain>RKS4594</strain>
    </source>
</reference>
<protein>
    <recommendedName>
        <fullName evidence="1">tRNA1(Val) (adenine(37)-N6)-methyltransferase</fullName>
        <ecNumber evidence="1">2.1.1.223</ecNumber>
    </recommendedName>
    <alternativeName>
        <fullName evidence="1">tRNA m6A37 methyltransferase</fullName>
    </alternativeName>
</protein>
<dbReference type="EC" id="2.1.1.223" evidence="1"/>
<dbReference type="EMBL" id="CP000857">
    <property type="protein sequence ID" value="ACN46853.1"/>
    <property type="status" value="ALT_INIT"/>
    <property type="molecule type" value="Genomic_DNA"/>
</dbReference>
<dbReference type="SMR" id="C0PVY6"/>
<dbReference type="KEGG" id="sei:SPC_2753"/>
<dbReference type="HOGENOM" id="CLU_061983_0_0_6"/>
<dbReference type="Proteomes" id="UP000001599">
    <property type="component" value="Chromosome"/>
</dbReference>
<dbReference type="GO" id="GO:0005737">
    <property type="term" value="C:cytoplasm"/>
    <property type="evidence" value="ECO:0007669"/>
    <property type="project" value="UniProtKB-SubCell"/>
</dbReference>
<dbReference type="GO" id="GO:0003676">
    <property type="term" value="F:nucleic acid binding"/>
    <property type="evidence" value="ECO:0007669"/>
    <property type="project" value="InterPro"/>
</dbReference>
<dbReference type="GO" id="GO:0016430">
    <property type="term" value="F:tRNA (adenine-N6)-methyltransferase activity"/>
    <property type="evidence" value="ECO:0007669"/>
    <property type="project" value="UniProtKB-UniRule"/>
</dbReference>
<dbReference type="GO" id="GO:0032259">
    <property type="term" value="P:methylation"/>
    <property type="evidence" value="ECO:0007669"/>
    <property type="project" value="UniProtKB-KW"/>
</dbReference>
<dbReference type="GO" id="GO:0008033">
    <property type="term" value="P:tRNA processing"/>
    <property type="evidence" value="ECO:0007669"/>
    <property type="project" value="UniProtKB-UniRule"/>
</dbReference>
<dbReference type="CDD" id="cd02440">
    <property type="entry name" value="AdoMet_MTases"/>
    <property type="match status" value="1"/>
</dbReference>
<dbReference type="Gene3D" id="3.40.50.150">
    <property type="entry name" value="Vaccinia Virus protein VP39"/>
    <property type="match status" value="1"/>
</dbReference>
<dbReference type="HAMAP" id="MF_01872">
    <property type="entry name" value="tRNA_methyltr_YfiC"/>
    <property type="match status" value="1"/>
</dbReference>
<dbReference type="InterPro" id="IPR002052">
    <property type="entry name" value="DNA_methylase_N6_adenine_CS"/>
</dbReference>
<dbReference type="InterPro" id="IPR029063">
    <property type="entry name" value="SAM-dependent_MTases_sf"/>
</dbReference>
<dbReference type="InterPro" id="IPR007848">
    <property type="entry name" value="Small_mtfrase_dom"/>
</dbReference>
<dbReference type="InterPro" id="IPR050210">
    <property type="entry name" value="tRNA_Adenine-N(6)_MTase"/>
</dbReference>
<dbReference type="InterPro" id="IPR022882">
    <property type="entry name" value="tRNA_adenine-N6_MeTrfase"/>
</dbReference>
<dbReference type="NCBIfam" id="NF047853">
    <property type="entry name" value="tRm6a37MtseTrmN"/>
    <property type="match status" value="1"/>
</dbReference>
<dbReference type="PANTHER" id="PTHR47739">
    <property type="entry name" value="TRNA1(VAL) (ADENINE(37)-N6)-METHYLTRANSFERASE"/>
    <property type="match status" value="1"/>
</dbReference>
<dbReference type="PANTHER" id="PTHR47739:SF1">
    <property type="entry name" value="TRNA1(VAL) (ADENINE(37)-N6)-METHYLTRANSFERASE"/>
    <property type="match status" value="1"/>
</dbReference>
<dbReference type="Pfam" id="PF05175">
    <property type="entry name" value="MTS"/>
    <property type="match status" value="1"/>
</dbReference>
<dbReference type="SUPFAM" id="SSF53335">
    <property type="entry name" value="S-adenosyl-L-methionine-dependent methyltransferases"/>
    <property type="match status" value="1"/>
</dbReference>
<dbReference type="PROSITE" id="PS00092">
    <property type="entry name" value="N6_MTASE"/>
    <property type="match status" value="1"/>
</dbReference>
<proteinExistence type="inferred from homology"/>
<gene>
    <name evidence="1" type="primary">yfiC</name>
    <name type="ordered locus">SPC_2753</name>
</gene>
<keyword id="KW-0963">Cytoplasm</keyword>
<keyword id="KW-0489">Methyltransferase</keyword>
<keyword id="KW-0949">S-adenosyl-L-methionine</keyword>
<keyword id="KW-0808">Transferase</keyword>
<keyword id="KW-0819">tRNA processing</keyword>
<accession>C0PVY6</accession>
<evidence type="ECO:0000255" key="1">
    <source>
        <dbReference type="HAMAP-Rule" id="MF_01872"/>
    </source>
</evidence>
<evidence type="ECO:0000305" key="2"/>
<comment type="function">
    <text evidence="1">Specifically methylates the adenine in position 37 of tRNA(1)(Val) (anticodon cmo5UAC).</text>
</comment>
<comment type="catalytic activity">
    <reaction evidence="1">
        <text>adenosine(37) in tRNA1(Val) + S-adenosyl-L-methionine = N(6)-methyladenosine(37) in tRNA1(Val) + S-adenosyl-L-homocysteine + H(+)</text>
        <dbReference type="Rhea" id="RHEA:43160"/>
        <dbReference type="Rhea" id="RHEA-COMP:10369"/>
        <dbReference type="Rhea" id="RHEA-COMP:10370"/>
        <dbReference type="ChEBI" id="CHEBI:15378"/>
        <dbReference type="ChEBI" id="CHEBI:57856"/>
        <dbReference type="ChEBI" id="CHEBI:59789"/>
        <dbReference type="ChEBI" id="CHEBI:74411"/>
        <dbReference type="ChEBI" id="CHEBI:74449"/>
        <dbReference type="EC" id="2.1.1.223"/>
    </reaction>
</comment>
<comment type="subcellular location">
    <subcellularLocation>
        <location evidence="1">Cytoplasm</location>
    </subcellularLocation>
</comment>
<comment type="similarity">
    <text evidence="1">Belongs to the methyltransferase superfamily. tRNA (adenine-N(6)-)-methyltransferase family.</text>
</comment>
<comment type="sequence caution" evidence="2">
    <conflict type="erroneous initiation">
        <sequence resource="EMBL-CDS" id="ACN46853"/>
    </conflict>
</comment>
<organism>
    <name type="scientific">Salmonella paratyphi C (strain RKS4594)</name>
    <dbReference type="NCBI Taxonomy" id="476213"/>
    <lineage>
        <taxon>Bacteria</taxon>
        <taxon>Pseudomonadati</taxon>
        <taxon>Pseudomonadota</taxon>
        <taxon>Gammaproteobacteria</taxon>
        <taxon>Enterobacterales</taxon>
        <taxon>Enterobacteriaceae</taxon>
        <taxon>Salmonella</taxon>
    </lineage>
</organism>